<reference key="1">
    <citation type="journal article" date="2014" name="Stand. Genomic Sci.">
        <title>Complete genome sequence of Anabaena variabilis ATCC 29413.</title>
        <authorList>
            <person name="Thiel T."/>
            <person name="Pratte B.S."/>
            <person name="Zhong J."/>
            <person name="Goodwin L."/>
            <person name="Copeland A."/>
            <person name="Lucas S."/>
            <person name="Han C."/>
            <person name="Pitluck S."/>
            <person name="Land M.L."/>
            <person name="Kyrpides N.C."/>
            <person name="Woyke T."/>
        </authorList>
    </citation>
    <scope>NUCLEOTIDE SEQUENCE [LARGE SCALE GENOMIC DNA]</scope>
    <source>
        <strain>ATCC 29413 / PCC 7937</strain>
    </source>
</reference>
<comment type="catalytic activity">
    <reaction evidence="1">
        <text>(S)-4-amino-5-oxopentanoate = 5-aminolevulinate</text>
        <dbReference type="Rhea" id="RHEA:14265"/>
        <dbReference type="ChEBI" id="CHEBI:57501"/>
        <dbReference type="ChEBI" id="CHEBI:356416"/>
        <dbReference type="EC" id="5.4.3.8"/>
    </reaction>
</comment>
<comment type="cofactor">
    <cofactor evidence="1">
        <name>pyridoxal 5'-phosphate</name>
        <dbReference type="ChEBI" id="CHEBI:597326"/>
    </cofactor>
</comment>
<comment type="pathway">
    <text evidence="1">Porphyrin-containing compound metabolism; protoporphyrin-IX biosynthesis; 5-aminolevulinate from L-glutamyl-tRNA(Glu): step 2/2.</text>
</comment>
<comment type="pathway">
    <text evidence="1">Porphyrin-containing compound metabolism; chlorophyll biosynthesis.</text>
</comment>
<comment type="subunit">
    <text evidence="1">Homodimer.</text>
</comment>
<comment type="subcellular location">
    <subcellularLocation>
        <location evidence="1">Cytoplasm</location>
    </subcellularLocation>
</comment>
<comment type="similarity">
    <text evidence="1">Belongs to the class-III pyridoxal-phosphate-dependent aminotransferase family. HemL subfamily.</text>
</comment>
<protein>
    <recommendedName>
        <fullName evidence="1">Glutamate-1-semialdehyde 2,1-aminomutase</fullName>
        <shortName evidence="1">GSA</shortName>
        <ecNumber evidence="1">5.4.3.8</ecNumber>
    </recommendedName>
    <alternativeName>
        <fullName evidence="1">Glutamate-1-semialdehyde aminotransferase</fullName>
        <shortName evidence="1">GSA-AT</shortName>
    </alternativeName>
</protein>
<dbReference type="EC" id="5.4.3.8" evidence="1"/>
<dbReference type="EMBL" id="CP000117">
    <property type="protein sequence ID" value="ABA24517.1"/>
    <property type="molecule type" value="Genomic_DNA"/>
</dbReference>
<dbReference type="SMR" id="Q3M3B9"/>
<dbReference type="STRING" id="240292.Ava_4920"/>
<dbReference type="KEGG" id="ava:Ava_4920"/>
<dbReference type="eggNOG" id="COG0001">
    <property type="taxonomic scope" value="Bacteria"/>
</dbReference>
<dbReference type="HOGENOM" id="CLU_016922_1_5_3"/>
<dbReference type="UniPathway" id="UPA00251">
    <property type="reaction ID" value="UER00317"/>
</dbReference>
<dbReference type="UniPathway" id="UPA00668"/>
<dbReference type="Proteomes" id="UP000002533">
    <property type="component" value="Chromosome"/>
</dbReference>
<dbReference type="GO" id="GO:0005737">
    <property type="term" value="C:cytoplasm"/>
    <property type="evidence" value="ECO:0007669"/>
    <property type="project" value="UniProtKB-SubCell"/>
</dbReference>
<dbReference type="GO" id="GO:0042286">
    <property type="term" value="F:glutamate-1-semialdehyde 2,1-aminomutase activity"/>
    <property type="evidence" value="ECO:0007669"/>
    <property type="project" value="UniProtKB-UniRule"/>
</dbReference>
<dbReference type="GO" id="GO:0030170">
    <property type="term" value="F:pyridoxal phosphate binding"/>
    <property type="evidence" value="ECO:0007669"/>
    <property type="project" value="InterPro"/>
</dbReference>
<dbReference type="GO" id="GO:0008483">
    <property type="term" value="F:transaminase activity"/>
    <property type="evidence" value="ECO:0007669"/>
    <property type="project" value="InterPro"/>
</dbReference>
<dbReference type="GO" id="GO:0015995">
    <property type="term" value="P:chlorophyll biosynthetic process"/>
    <property type="evidence" value="ECO:0007669"/>
    <property type="project" value="UniProtKB-UniRule"/>
</dbReference>
<dbReference type="GO" id="GO:0006782">
    <property type="term" value="P:protoporphyrinogen IX biosynthetic process"/>
    <property type="evidence" value="ECO:0007669"/>
    <property type="project" value="UniProtKB-UniRule"/>
</dbReference>
<dbReference type="CDD" id="cd00610">
    <property type="entry name" value="OAT_like"/>
    <property type="match status" value="1"/>
</dbReference>
<dbReference type="FunFam" id="3.40.640.10:FF:000021">
    <property type="entry name" value="Glutamate-1-semialdehyde 2,1-aminomutase"/>
    <property type="match status" value="1"/>
</dbReference>
<dbReference type="FunFam" id="3.90.1150.10:FF:000012">
    <property type="entry name" value="Glutamate-1-semialdehyde 2,1-aminomutase"/>
    <property type="match status" value="1"/>
</dbReference>
<dbReference type="Gene3D" id="3.90.1150.10">
    <property type="entry name" value="Aspartate Aminotransferase, domain 1"/>
    <property type="match status" value="1"/>
</dbReference>
<dbReference type="Gene3D" id="3.40.640.10">
    <property type="entry name" value="Type I PLP-dependent aspartate aminotransferase-like (Major domain)"/>
    <property type="match status" value="1"/>
</dbReference>
<dbReference type="HAMAP" id="MF_00375">
    <property type="entry name" value="HemL_aminotrans_3"/>
    <property type="match status" value="1"/>
</dbReference>
<dbReference type="InterPro" id="IPR004639">
    <property type="entry name" value="4pyrrol_synth_GluAld_NH2Trfase"/>
</dbReference>
<dbReference type="InterPro" id="IPR005814">
    <property type="entry name" value="Aminotrans_3"/>
</dbReference>
<dbReference type="InterPro" id="IPR049704">
    <property type="entry name" value="Aminotrans_3_PPA_site"/>
</dbReference>
<dbReference type="InterPro" id="IPR015424">
    <property type="entry name" value="PyrdxlP-dep_Trfase"/>
</dbReference>
<dbReference type="InterPro" id="IPR015421">
    <property type="entry name" value="PyrdxlP-dep_Trfase_major"/>
</dbReference>
<dbReference type="InterPro" id="IPR015422">
    <property type="entry name" value="PyrdxlP-dep_Trfase_small"/>
</dbReference>
<dbReference type="NCBIfam" id="TIGR00713">
    <property type="entry name" value="hemL"/>
    <property type="match status" value="1"/>
</dbReference>
<dbReference type="NCBIfam" id="NF000818">
    <property type="entry name" value="PRK00062.1"/>
    <property type="match status" value="1"/>
</dbReference>
<dbReference type="PANTHER" id="PTHR43713">
    <property type="entry name" value="GLUTAMATE-1-SEMIALDEHYDE 2,1-AMINOMUTASE"/>
    <property type="match status" value="1"/>
</dbReference>
<dbReference type="PANTHER" id="PTHR43713:SF3">
    <property type="entry name" value="GLUTAMATE-1-SEMIALDEHYDE 2,1-AMINOMUTASE 1, CHLOROPLASTIC-RELATED"/>
    <property type="match status" value="1"/>
</dbReference>
<dbReference type="Pfam" id="PF00202">
    <property type="entry name" value="Aminotran_3"/>
    <property type="match status" value="1"/>
</dbReference>
<dbReference type="SUPFAM" id="SSF53383">
    <property type="entry name" value="PLP-dependent transferases"/>
    <property type="match status" value="1"/>
</dbReference>
<dbReference type="PROSITE" id="PS00600">
    <property type="entry name" value="AA_TRANSFER_CLASS_3"/>
    <property type="match status" value="1"/>
</dbReference>
<proteinExistence type="inferred from homology"/>
<feature type="chain" id="PRO_0000243533" description="Glutamate-1-semialdehyde 2,1-aminomutase">
    <location>
        <begin position="1"/>
        <end position="432"/>
    </location>
</feature>
<feature type="modified residue" description="N6-(pyridoxal phosphate)lysine" evidence="1">
    <location>
        <position position="272"/>
    </location>
</feature>
<sequence>MVNTTIKTTKSQEIFAAAQNLMPGGVSSPVRAFKSVGGQPIVFDHVKGAYIWDVDGNQYIDYVGTWGPAICGHAHPDVIGALHEALEKGTSFGAPSFLENVLAEMVIAAVPSIEMVRFVNSGTEACMAVLRLMRAFTNREKVIKFEGCYHGHADMFLVKAGSGVATLGLPDSPGVPKSATSSTLTAPYNDLEAVKALFAENRDQIAGVILEPVVGNAGFITPDAGFLEGLRELTHEHGALLVFDEVMTGFRIAYGGAQEKFGVTPDLTTLGKVIGGGLPVGAYGGRRDIMSMIAPAGPVYQAGTLSGNPLAMTAGIKTLELLQKPGAYEYLERITKKLADGLLQVAQETGHAACGGHISAMFGLFFTSGPVHNYEDAKNSDTAKFGRFHRGMLERGVYLAPSQFEAGFTSLAHTDEDIDQTIAIAREVLSSI</sequence>
<accession>Q3M3B9</accession>
<gene>
    <name evidence="1" type="primary">hemL</name>
    <name type="ordered locus">Ava_4920</name>
</gene>
<keyword id="KW-0149">Chlorophyll biosynthesis</keyword>
<keyword id="KW-0963">Cytoplasm</keyword>
<keyword id="KW-0413">Isomerase</keyword>
<keyword id="KW-0627">Porphyrin biosynthesis</keyword>
<keyword id="KW-0663">Pyridoxal phosphate</keyword>
<evidence type="ECO:0000255" key="1">
    <source>
        <dbReference type="HAMAP-Rule" id="MF_00375"/>
    </source>
</evidence>
<organism>
    <name type="scientific">Trichormus variabilis (strain ATCC 29413 / PCC 7937)</name>
    <name type="common">Anabaena variabilis</name>
    <dbReference type="NCBI Taxonomy" id="240292"/>
    <lineage>
        <taxon>Bacteria</taxon>
        <taxon>Bacillati</taxon>
        <taxon>Cyanobacteriota</taxon>
        <taxon>Cyanophyceae</taxon>
        <taxon>Nostocales</taxon>
        <taxon>Nostocaceae</taxon>
        <taxon>Trichormus</taxon>
    </lineage>
</organism>
<name>GSA_TRIV2</name>